<keyword id="KW-0521">NADP</keyword>
<keyword id="KW-0560">Oxidoreductase</keyword>
<keyword id="KW-1185">Reference proteome</keyword>
<reference key="1">
    <citation type="journal article" date="2017" name="Nat. Microbiol.">
        <title>Global analysis of biosynthetic gene clusters reveals vast potential of secondary metabolite production in Penicillium species.</title>
        <authorList>
            <person name="Nielsen J.C."/>
            <person name="Grijseels S."/>
            <person name="Prigent S."/>
            <person name="Ji B."/>
            <person name="Dainat J."/>
            <person name="Nielsen K.F."/>
            <person name="Frisvad J.C."/>
            <person name="Workman M."/>
            <person name="Nielsen J."/>
        </authorList>
    </citation>
    <scope>NUCLEOTIDE SEQUENCE [LARGE SCALE GENOMIC DNA]</scope>
    <source>
        <strain>IBT 11843</strain>
    </source>
</reference>
<reference key="2">
    <citation type="journal article" date="1993" name="J. Antibiot.">
        <title>Calbistrins, novel antifungal agents produced by Penicillium restrictum. I. Production, taxonomy of the producing organism and biological activity.</title>
        <authorList>
            <person name="Jackson M."/>
            <person name="Karwowski J.P."/>
            <person name="Humphrey P.E."/>
            <person name="Kohl W.L."/>
            <person name="Barlow G.J."/>
            <person name="Tanaka S.K."/>
        </authorList>
    </citation>
    <scope>BIOTECHNOLOGY</scope>
</reference>
<reference key="3">
    <citation type="journal article" date="2013" name="Molecules">
        <title>Bio-activity and dereplication-based discovery of ophiobolins and other fungal secondary metabolites targeting leukemia cells.</title>
        <authorList>
            <person name="Bladt T.T."/>
            <person name="Duerr C."/>
            <person name="Knudsen P.B."/>
            <person name="Kildgaard S."/>
            <person name="Frisvad J.C."/>
            <person name="Gotfredsen C.H."/>
            <person name="Seiffert M."/>
            <person name="Larsen T.O."/>
        </authorList>
    </citation>
    <scope>BIOTECHNOLOGY</scope>
</reference>
<reference key="4">
    <citation type="journal article" date="2018" name="Fungal Biol. Biotechnol.">
        <title>Identification of the decumbenone biosynthetic gene cluster in Penicillium decumbens and the importance for production of calbistrin.</title>
        <authorList>
            <person name="Grijseels S."/>
            <person name="Pohl C."/>
            <person name="Nielsen J.C."/>
            <person name="Wasil Z."/>
            <person name="Nygaard Y."/>
            <person name="Nielsen J."/>
            <person name="Frisvad J.C."/>
            <person name="Nielsen K.F."/>
            <person name="Workman M."/>
            <person name="Larsen T.O."/>
            <person name="Driessen A.J.M."/>
            <person name="Frandsen R.J.N."/>
        </authorList>
    </citation>
    <scope>IDENTIFICATION</scope>
    <scope>FUNCTION</scope>
    <scope>INDUCTION</scope>
    <scope>PATHWAY</scope>
</reference>
<sequence length="346" mass="37767">MALDRYAALHVSTPQGRGDGRPTADQVLRDQDPLGSHWSDKVILITGGTAGLGAESARVLHKTGAKIFIMGRDIAKGEKVAADISASNPDYPPIEVIQMDQSRLESVREGAVEFLKRSGGKLNVLMANAGIVASPVKETQDGFEAVFAINYLSTFLLVQLLAPALVASTTPEYNSRLVVVSSAGHRASNIDPDKYNLVGEGYDPSKAYARSKTASILMANEFERRYGDRGVHALSLNPGIIMDTEISRGLPGTSASRREQYYKMEPLLAQYEKDVMQGAATQVWATVAKELEGKGGLYLDDVQVAREATHEGQFCRPGWKPWIWNEDNAVRLWKDSLNMVGLESEN</sequence>
<dbReference type="EC" id="1.-.-.-" evidence="10"/>
<dbReference type="EMBL" id="MDYL01000013">
    <property type="protein sequence ID" value="OQD73893.1"/>
    <property type="molecule type" value="Genomic_DNA"/>
</dbReference>
<dbReference type="SMR" id="A0A1V6PAN1"/>
<dbReference type="STRING" id="69771.A0A1V6PAN1"/>
<dbReference type="OMA" id="KTEYNDW"/>
<dbReference type="OrthoDB" id="4369512at2759"/>
<dbReference type="Proteomes" id="UP000191522">
    <property type="component" value="Unassembled WGS sequence"/>
</dbReference>
<dbReference type="GO" id="GO:0016491">
    <property type="term" value="F:oxidoreductase activity"/>
    <property type="evidence" value="ECO:0007669"/>
    <property type="project" value="UniProtKB-KW"/>
</dbReference>
<dbReference type="Gene3D" id="3.40.50.720">
    <property type="entry name" value="NAD(P)-binding Rossmann-like Domain"/>
    <property type="match status" value="1"/>
</dbReference>
<dbReference type="InterPro" id="IPR036291">
    <property type="entry name" value="NAD(P)-bd_dom_sf"/>
</dbReference>
<dbReference type="InterPro" id="IPR002347">
    <property type="entry name" value="SDR_fam"/>
</dbReference>
<dbReference type="PANTHER" id="PTHR24320:SF272">
    <property type="entry name" value="NAD(P)-BINDING ROSSMANN-FOLD SUPERFAMILY PROTEIN"/>
    <property type="match status" value="1"/>
</dbReference>
<dbReference type="PANTHER" id="PTHR24320">
    <property type="entry name" value="RETINOL DEHYDROGENASE"/>
    <property type="match status" value="1"/>
</dbReference>
<dbReference type="Pfam" id="PF00106">
    <property type="entry name" value="adh_short"/>
    <property type="match status" value="1"/>
</dbReference>
<dbReference type="PRINTS" id="PR00081">
    <property type="entry name" value="GDHRDH"/>
</dbReference>
<dbReference type="SUPFAM" id="SSF51735">
    <property type="entry name" value="NAD(P)-binding Rossmann-fold domains"/>
    <property type="match status" value="1"/>
</dbReference>
<comment type="function">
    <text evidence="6 10">Oxidoreductase; part of the gene cluster that mediates the biosynthesis of calbistrin A and related compounds. Calbistrin A is a secondary metabolite with an interesting structure that was recently found to have bioactivity against leukemia cells. It consists of two polyketides linked by an ester bond: a bicyclic decalin containing polyketide and a linear 12 carbon dioic acid structure (PubMed:30598828). The polyketide synthase calA is probably responsible for forming the decalin moiety. Because calA lacks a designated enoylreductase (ER) domain, the required activity is provided by the trans-enoyl reductase calK (PubMed:30598828). Following release from the PKS, calF then probably catalyzes the oxidation and the subsequent Diels Alder cycloisomerization that lead to the formation of the decalin moiety (Probable). The decalin polyketide backbone includes two C-methyl groups, at C7 and C11 in backbone, of which the C7 position is probably methylated by the methyltransferase domain of calA. A candidate for adding the methyl group at C11, if not done by CalA, is the cluster methyltransferase calH (Probable). Several additional tailoring enzymes within the cluster could be involved in the modification of the decalin polyketide product. Those include the 3 cytochrome P450 monooxygenases CalE, CalG and CalL, of which one might be responsible for the introduction of the extra hydroxyl group attached to the backbone of the decalin moiety, at position C9 in the backbone, that allows for attachment of the linear moiety (Probable). One tailoring enzyme activity that is expected to be involved in biosynthesis of calbistrin is an acyltransferase for connecting the two polyketide synthase products, and which could be performed by the cluster acyltransferase calJ (Probable). The enzyme responsible for the biosynthesis of the linear moiety, probably a second PKS, has not been identified yet (Probable).</text>
</comment>
<comment type="pathway">
    <text evidence="10">Secondary metabolite biosynthesis.</text>
</comment>
<comment type="induction">
    <text evidence="6">Expression is induced in complex medium (Czapek yeast autolysate medium) supporting calbistrin production.</text>
</comment>
<comment type="biotechnology">
    <text evidence="5 7">Calbistrin A has been reported to possess a number of interesting bioactivities including antifungal active against Candida albicans and cytotoxic toward both healthy and leukemic human cells.</text>
</comment>
<comment type="similarity">
    <text evidence="9">Belongs to the short-chain dehydrogenases/reductases (SDR) family.</text>
</comment>
<feature type="chain" id="PRO_0000446479" description="Oxidoreductase calI">
    <location>
        <begin position="1"/>
        <end position="346"/>
    </location>
</feature>
<feature type="region of interest" description="Disordered" evidence="4">
    <location>
        <begin position="11"/>
        <end position="33"/>
    </location>
</feature>
<feature type="compositionally biased region" description="Basic and acidic residues" evidence="4">
    <location>
        <begin position="18"/>
        <end position="32"/>
    </location>
</feature>
<feature type="active site" description="Proton donor" evidence="2">
    <location>
        <position position="181"/>
    </location>
</feature>
<feature type="active site" description="Proton acceptor" evidence="3">
    <location>
        <position position="208"/>
    </location>
</feature>
<feature type="active site" description="Lowers pKa of active site Tyr" evidence="2">
    <location>
        <position position="212"/>
    </location>
</feature>
<feature type="binding site" evidence="1">
    <location>
        <position position="52"/>
    </location>
    <ligand>
        <name>NADP(+)</name>
        <dbReference type="ChEBI" id="CHEBI:58349"/>
    </ligand>
</feature>
<feature type="binding site" evidence="1">
    <location>
        <position position="76"/>
    </location>
    <ligand>
        <name>NADP(+)</name>
        <dbReference type="ChEBI" id="CHEBI:58349"/>
    </ligand>
</feature>
<feature type="binding site" evidence="1">
    <location>
        <position position="100"/>
    </location>
    <ligand>
        <name>NADP(+)</name>
        <dbReference type="ChEBI" id="CHEBI:58349"/>
    </ligand>
</feature>
<feature type="binding site" evidence="2">
    <location>
        <position position="128"/>
    </location>
    <ligand>
        <name>NADP(+)</name>
        <dbReference type="ChEBI" id="CHEBI:58349"/>
    </ligand>
</feature>
<feature type="binding site" evidence="2">
    <location>
        <position position="208"/>
    </location>
    <ligand>
        <name>NADP(+)</name>
        <dbReference type="ChEBI" id="CHEBI:58349"/>
    </ligand>
</feature>
<feature type="binding site" evidence="2">
    <location>
        <position position="212"/>
    </location>
    <ligand>
        <name>NADP(+)</name>
        <dbReference type="ChEBI" id="CHEBI:58349"/>
    </ligand>
</feature>
<feature type="binding site" evidence="2">
    <location>
        <position position="241"/>
    </location>
    <ligand>
        <name>NADP(+)</name>
        <dbReference type="ChEBI" id="CHEBI:58349"/>
    </ligand>
</feature>
<organism>
    <name type="scientific">Penicillium decumbens</name>
    <dbReference type="NCBI Taxonomy" id="69771"/>
    <lineage>
        <taxon>Eukaryota</taxon>
        <taxon>Fungi</taxon>
        <taxon>Dikarya</taxon>
        <taxon>Ascomycota</taxon>
        <taxon>Pezizomycotina</taxon>
        <taxon>Eurotiomycetes</taxon>
        <taxon>Eurotiomycetidae</taxon>
        <taxon>Eurotiales</taxon>
        <taxon>Aspergillaceae</taxon>
        <taxon>Penicillium</taxon>
    </lineage>
</organism>
<proteinExistence type="evidence at protein level"/>
<accession>A0A1V6PAN1</accession>
<protein>
    <recommendedName>
        <fullName evidence="8">Oxidoreductase calI</fullName>
        <ecNumber evidence="10">1.-.-.-</ecNumber>
    </recommendedName>
    <alternativeName>
        <fullName evidence="8">Calbistrin biosynthesis cluster protein I</fullName>
    </alternativeName>
</protein>
<gene>
    <name evidence="8" type="primary">calI</name>
    <name type="ORF">PENDEC_c013G00477</name>
</gene>
<name>CALI_PENDC</name>
<evidence type="ECO:0000250" key="1">
    <source>
        <dbReference type="UniProtKB" id="L0E2Z4"/>
    </source>
</evidence>
<evidence type="ECO:0000250" key="2">
    <source>
        <dbReference type="UniProtKB" id="O93868"/>
    </source>
</evidence>
<evidence type="ECO:0000255" key="3">
    <source>
        <dbReference type="PROSITE-ProRule" id="PRU10001"/>
    </source>
</evidence>
<evidence type="ECO:0000256" key="4">
    <source>
        <dbReference type="SAM" id="MobiDB-lite"/>
    </source>
</evidence>
<evidence type="ECO:0000269" key="5">
    <source>
    </source>
</evidence>
<evidence type="ECO:0000269" key="6">
    <source>
    </source>
</evidence>
<evidence type="ECO:0000269" key="7">
    <source>
    </source>
</evidence>
<evidence type="ECO:0000303" key="8">
    <source>
    </source>
</evidence>
<evidence type="ECO:0000305" key="9"/>
<evidence type="ECO:0000305" key="10">
    <source>
    </source>
</evidence>